<evidence type="ECO:0000250" key="1"/>
<evidence type="ECO:0000255" key="2"/>
<evidence type="ECO:0000255" key="3">
    <source>
        <dbReference type="PROSITE-ProRule" id="PRU00741"/>
    </source>
</evidence>
<evidence type="ECO:0007829" key="4">
    <source>
        <dbReference type="PDB" id="1DOT"/>
    </source>
</evidence>
<evidence type="ECO:0007829" key="5">
    <source>
        <dbReference type="PDB" id="1GV8"/>
    </source>
</evidence>
<evidence type="ECO:0007829" key="6">
    <source>
        <dbReference type="PDB" id="1GVC"/>
    </source>
</evidence>
<evidence type="ECO:0007829" key="7">
    <source>
        <dbReference type="PDB" id="1OVB"/>
    </source>
</evidence>
<name>TRFE_ANAPL</name>
<keyword id="KW-0002">3D-structure</keyword>
<keyword id="KW-1015">Disulfide bond</keyword>
<keyword id="KW-0325">Glycoprotein</keyword>
<keyword id="KW-0406">Ion transport</keyword>
<keyword id="KW-0408">Iron</keyword>
<keyword id="KW-0410">Iron transport</keyword>
<keyword id="KW-0479">Metal-binding</keyword>
<keyword id="KW-0677">Repeat</keyword>
<keyword id="KW-0964">Secreted</keyword>
<keyword id="KW-0813">Transport</keyword>
<organism>
    <name type="scientific">Anas platyrhynchos</name>
    <name type="common">Mallard</name>
    <name type="synonym">Anas boschas</name>
    <dbReference type="NCBI Taxonomy" id="8839"/>
    <lineage>
        <taxon>Eukaryota</taxon>
        <taxon>Metazoa</taxon>
        <taxon>Chordata</taxon>
        <taxon>Craniata</taxon>
        <taxon>Vertebrata</taxon>
        <taxon>Euteleostomi</taxon>
        <taxon>Archelosauria</taxon>
        <taxon>Archosauria</taxon>
        <taxon>Dinosauria</taxon>
        <taxon>Saurischia</taxon>
        <taxon>Theropoda</taxon>
        <taxon>Coelurosauria</taxon>
        <taxon>Aves</taxon>
        <taxon>Neognathae</taxon>
        <taxon>Galloanserae</taxon>
        <taxon>Anseriformes</taxon>
        <taxon>Anatidae</taxon>
        <taxon>Anatinae</taxon>
        <taxon>Anas</taxon>
    </lineage>
</organism>
<dbReference type="PDB" id="1AOV">
    <property type="method" value="X-ray"/>
    <property type="resolution" value="4.00 A"/>
    <property type="chains" value="A=1-686"/>
</dbReference>
<dbReference type="PDB" id="1DOT">
    <property type="method" value="X-ray"/>
    <property type="resolution" value="2.35 A"/>
    <property type="chains" value="A=1-686"/>
</dbReference>
<dbReference type="PDB" id="1GV8">
    <property type="method" value="X-ray"/>
    <property type="resolution" value="1.95 A"/>
    <property type="chains" value="A=91-249"/>
</dbReference>
<dbReference type="PDB" id="1GVC">
    <property type="method" value="X-ray"/>
    <property type="resolution" value="1.90 A"/>
    <property type="chains" value="A=91-247"/>
</dbReference>
<dbReference type="PDB" id="1OVB">
    <property type="method" value="X-ray"/>
    <property type="resolution" value="2.30 A"/>
    <property type="chains" value="A=91-249"/>
</dbReference>
<dbReference type="PDBsum" id="1AOV"/>
<dbReference type="PDBsum" id="1DOT"/>
<dbReference type="PDBsum" id="1GV8"/>
<dbReference type="PDBsum" id="1GVC"/>
<dbReference type="PDBsum" id="1OVB"/>
<dbReference type="PCDDB" id="P56410"/>
<dbReference type="SMR" id="P56410"/>
<dbReference type="Allergome" id="2104">
    <property type="allergen name" value="Ana p 3"/>
</dbReference>
<dbReference type="EvolutionaryTrace" id="P56410"/>
<dbReference type="Proteomes" id="UP000694400">
    <property type="component" value="Unplaced"/>
</dbReference>
<dbReference type="GO" id="GO:0005769">
    <property type="term" value="C:early endosome"/>
    <property type="evidence" value="ECO:0007669"/>
    <property type="project" value="TreeGrafter"/>
</dbReference>
<dbReference type="GO" id="GO:0005615">
    <property type="term" value="C:extracellular space"/>
    <property type="evidence" value="ECO:0007669"/>
    <property type="project" value="InterPro"/>
</dbReference>
<dbReference type="GO" id="GO:0005886">
    <property type="term" value="C:plasma membrane"/>
    <property type="evidence" value="ECO:0007669"/>
    <property type="project" value="TreeGrafter"/>
</dbReference>
<dbReference type="GO" id="GO:0055037">
    <property type="term" value="C:recycling endosome"/>
    <property type="evidence" value="ECO:0007669"/>
    <property type="project" value="TreeGrafter"/>
</dbReference>
<dbReference type="GO" id="GO:0046872">
    <property type="term" value="F:metal ion binding"/>
    <property type="evidence" value="ECO:0007669"/>
    <property type="project" value="UniProtKB-KW"/>
</dbReference>
<dbReference type="GO" id="GO:0019731">
    <property type="term" value="P:antibacterial humoral response"/>
    <property type="evidence" value="ECO:0007669"/>
    <property type="project" value="TreeGrafter"/>
</dbReference>
<dbReference type="GO" id="GO:0006826">
    <property type="term" value="P:iron ion transport"/>
    <property type="evidence" value="ECO:0007669"/>
    <property type="project" value="UniProtKB-KW"/>
</dbReference>
<dbReference type="CDD" id="cd13617">
    <property type="entry name" value="PBP2_transferrin_C"/>
    <property type="match status" value="1"/>
</dbReference>
<dbReference type="CDD" id="cd13618">
    <property type="entry name" value="PBP2_transferrin_N"/>
    <property type="match status" value="1"/>
</dbReference>
<dbReference type="FunFam" id="3.40.190.10:FF:000095">
    <property type="entry name" value="Lactotransferrin"/>
    <property type="match status" value="1"/>
</dbReference>
<dbReference type="FunFam" id="3.40.190.10:FF:000366">
    <property type="entry name" value="Ovotransferrin"/>
    <property type="match status" value="1"/>
</dbReference>
<dbReference type="Gene3D" id="3.40.190.10">
    <property type="entry name" value="Periplasmic binding protein-like II"/>
    <property type="match status" value="4"/>
</dbReference>
<dbReference type="InterPro" id="IPR016357">
    <property type="entry name" value="Transferrin"/>
</dbReference>
<dbReference type="InterPro" id="IPR001156">
    <property type="entry name" value="Transferrin-like_dom"/>
</dbReference>
<dbReference type="InterPro" id="IPR018195">
    <property type="entry name" value="Transferrin_Fe_BS"/>
</dbReference>
<dbReference type="PANTHER" id="PTHR11485:SF31">
    <property type="entry name" value="SEROTRANSFERRIN"/>
    <property type="match status" value="1"/>
</dbReference>
<dbReference type="PANTHER" id="PTHR11485">
    <property type="entry name" value="TRANSFERRIN"/>
    <property type="match status" value="1"/>
</dbReference>
<dbReference type="Pfam" id="PF00405">
    <property type="entry name" value="Transferrin"/>
    <property type="match status" value="2"/>
</dbReference>
<dbReference type="PIRSF" id="PIRSF002549">
    <property type="entry name" value="Transferrin"/>
    <property type="match status" value="1"/>
</dbReference>
<dbReference type="PRINTS" id="PR00422">
    <property type="entry name" value="TRANSFERRIN"/>
</dbReference>
<dbReference type="SMART" id="SM00094">
    <property type="entry name" value="TR_FER"/>
    <property type="match status" value="2"/>
</dbReference>
<dbReference type="SUPFAM" id="SSF53850">
    <property type="entry name" value="Periplasmic binding protein-like II"/>
    <property type="match status" value="2"/>
</dbReference>
<dbReference type="PROSITE" id="PS00205">
    <property type="entry name" value="TRANSFERRIN_LIKE_1"/>
    <property type="match status" value="2"/>
</dbReference>
<dbReference type="PROSITE" id="PS00206">
    <property type="entry name" value="TRANSFERRIN_LIKE_2"/>
    <property type="match status" value="2"/>
</dbReference>
<dbReference type="PROSITE" id="PS00207">
    <property type="entry name" value="TRANSFERRIN_LIKE_3"/>
    <property type="match status" value="1"/>
</dbReference>
<dbReference type="PROSITE" id="PS51408">
    <property type="entry name" value="TRANSFERRIN_LIKE_4"/>
    <property type="match status" value="2"/>
</dbReference>
<accession>P56410</accession>
<proteinExistence type="evidence at protein level"/>
<protein>
    <recommendedName>
        <fullName>Ovotransferrin</fullName>
    </recommendedName>
</protein>
<reference key="1">
    <citation type="journal article" date="1996" name="Acta Crystallogr. D">
        <title>Structure of diferric duck ovotransferrin at 2.35-A resolution.</title>
        <authorList>
            <person name="Rawas A."/>
            <person name="Muirhead H."/>
            <person name="Williams J."/>
        </authorList>
    </citation>
    <scope>X-RAY CRYSTALLOGRAPHY (2.35 ANGSTROMS)</scope>
</reference>
<reference key="2">
    <citation type="journal article" date="1997" name="Acta Crystallogr. D">
        <title>Structure of apo duck ovotransferrin: the structures of the N and C lobes are in the open form.</title>
        <authorList>
            <person name="Rawas A."/>
            <person name="Muirhead H."/>
            <person name="Williams J."/>
        </authorList>
    </citation>
    <scope>X-RAY CRYSTALLOGRAPHY (4.0 ANGSTROMS)</scope>
</reference>
<comment type="function">
    <text>Transferrins are iron binding transport proteins which can bind two Fe(3+) ions in association with the binding of an anion, usually bicarbonate. It is responsible for the transport of iron from sites of absorption and heme degradation to those of storage and utilization. Serum transferrin may also have a further role in stimulating cell proliferation.</text>
</comment>
<comment type="function">
    <text evidence="1">Ovotransferrin has a bacteriostatic function. Its concentration in avian egg is the highest concentration of any transferrin in vivo (By similarity).</text>
</comment>
<comment type="subunit">
    <text>Monomer.</text>
</comment>
<comment type="subcellular location">
    <subcellularLocation>
        <location>Secreted</location>
    </subcellularLocation>
</comment>
<comment type="similarity">
    <text evidence="3">Belongs to the transferrin family.</text>
</comment>
<sequence>APPKTTVRWCTISSAEEKKCNSLKDHMQQERVTLSCVQKATYLDCIKAISNNEADAISLDGGQVFEAGLAPYKLKPIAAEVYERSGGSTTSYYAVAVVKKGTDFMIKDLRGKTSCHTGLGRSAGWNIPIGTLIHREDIEWEGIESGISEQAVAKFFSASCVPGATIEQKLCRQCKGDAKTKCLRNGPYSGYSGAFQCLKDGKGDVAFVKHTTVQENAPEEKDEYELLCLDGSRQPVDSYKTCNWARVAAHAVVARDDSKIDDIWSFLGMQAYSLGVDTTSDFHLFGPPGKKDPVLKDLLFKDSAIMLKRVPELMDSQLYLGFEYYSAIQSLRKDQLTVGPRENKIQWCAVGKDEKSKCDRWSVVSNGEVECTILDDNKDCIVKITKGEADAISLDGGFVYTAGVCGLVPVVGESYEDETQCSKDEEQPAYYFAVAVVKKSSAITWNNLQGKKSCHTAVGRTAGWNIPMGLIHNKTGSCDFDDYFSEGCAPGSPPNSRLCKLCQGSGENLLEKCVASSHEKYYGYTGALRCLVEQGDVAFIKHSTVGENVSGSNKDDWAKGLTRDDFELLCTNGKRAKTMDYKTCHLAKVPTHAVVARPEKANKIRELLEGQEKLFGLHGTEKERFMMFQSQTKDLLFKALTKCLVKLRQGITYKEFLGDEYYASVASLNTCNPSDLLQVCTFLEDK</sequence>
<feature type="chain" id="PRO_0000082440" description="Ovotransferrin">
    <location>
        <begin position="1"/>
        <end position="686"/>
    </location>
</feature>
<feature type="domain" description="Transferrin-like 1" evidence="3">
    <location>
        <begin position="7"/>
        <end position="333"/>
    </location>
</feature>
<feature type="domain" description="Transferrin-like 2" evidence="3">
    <location>
        <begin position="345"/>
        <end position="670"/>
    </location>
</feature>
<feature type="region of interest" description="Connecting region">
    <location>
        <begin position="333"/>
        <end position="341"/>
    </location>
</feature>
<feature type="glycosylation site" description="N-linked (GlcNAc...) asparagine" evidence="2">
    <location>
        <position position="473"/>
    </location>
</feature>
<feature type="glycosylation site" description="N-linked (GlcNAc...) asparagine" evidence="2">
    <location>
        <position position="548"/>
    </location>
</feature>
<feature type="disulfide bond">
    <location>
        <begin position="10"/>
        <end position="45"/>
    </location>
</feature>
<feature type="disulfide bond">
    <location>
        <begin position="20"/>
        <end position="36"/>
    </location>
</feature>
<feature type="disulfide bond">
    <location>
        <begin position="115"/>
        <end position="197"/>
    </location>
</feature>
<feature type="disulfide bond">
    <location>
        <begin position="160"/>
        <end position="174"/>
    </location>
</feature>
<feature type="disulfide bond">
    <location>
        <begin position="171"/>
        <end position="182"/>
    </location>
</feature>
<feature type="disulfide bond">
    <location>
        <begin position="228"/>
        <end position="242"/>
    </location>
</feature>
<feature type="disulfide bond">
    <location>
        <begin position="348"/>
        <end position="380"/>
    </location>
</feature>
<feature type="disulfide bond">
    <location>
        <begin position="358"/>
        <end position="371"/>
    </location>
</feature>
<feature type="disulfide bond">
    <location>
        <begin position="405"/>
        <end position="680"/>
    </location>
</feature>
<feature type="disulfide bond">
    <location>
        <begin position="421"/>
        <end position="643"/>
    </location>
</feature>
<feature type="disulfide bond">
    <location>
        <begin position="454"/>
        <end position="530"/>
    </location>
</feature>
<feature type="disulfide bond">
    <location>
        <begin position="478"/>
        <end position="671"/>
    </location>
</feature>
<feature type="disulfide bond">
    <location>
        <begin position="488"/>
        <end position="502"/>
    </location>
</feature>
<feature type="disulfide bond">
    <location>
        <begin position="499"/>
        <end position="513"/>
    </location>
</feature>
<feature type="disulfide bond">
    <location>
        <begin position="570"/>
        <end position="584"/>
    </location>
</feature>
<feature type="strand" evidence="4">
    <location>
        <begin position="6"/>
        <end position="13"/>
    </location>
</feature>
<feature type="helix" evidence="4">
    <location>
        <begin position="16"/>
        <end position="23"/>
    </location>
</feature>
<feature type="turn" evidence="4">
    <location>
        <begin position="24"/>
        <end position="29"/>
    </location>
</feature>
<feature type="strand" evidence="4">
    <location>
        <begin position="30"/>
        <end position="38"/>
    </location>
</feature>
<feature type="helix" evidence="4">
    <location>
        <begin position="42"/>
        <end position="50"/>
    </location>
</feature>
<feature type="turn" evidence="4">
    <location>
        <begin position="51"/>
        <end position="53"/>
    </location>
</feature>
<feature type="strand" evidence="4">
    <location>
        <begin position="56"/>
        <end position="59"/>
    </location>
</feature>
<feature type="helix" evidence="4">
    <location>
        <begin position="61"/>
        <end position="67"/>
    </location>
</feature>
<feature type="strand" evidence="4">
    <location>
        <begin position="75"/>
        <end position="81"/>
    </location>
</feature>
<feature type="strand" evidence="4">
    <location>
        <begin position="84"/>
        <end position="86"/>
    </location>
</feature>
<feature type="strand" evidence="6">
    <location>
        <begin position="92"/>
        <end position="99"/>
    </location>
</feature>
<feature type="helix" evidence="6">
    <location>
        <begin position="106"/>
        <end position="108"/>
    </location>
</feature>
<feature type="strand" evidence="6">
    <location>
        <begin position="113"/>
        <end position="117"/>
    </location>
</feature>
<feature type="turn" evidence="6">
    <location>
        <begin position="122"/>
        <end position="125"/>
    </location>
</feature>
<feature type="helix" evidence="6">
    <location>
        <begin position="126"/>
        <end position="134"/>
    </location>
</feature>
<feature type="strand" evidence="4">
    <location>
        <begin position="136"/>
        <end position="138"/>
    </location>
</feature>
<feature type="helix" evidence="5">
    <location>
        <begin position="143"/>
        <end position="145"/>
    </location>
</feature>
<feature type="helix" evidence="6">
    <location>
        <begin position="148"/>
        <end position="155"/>
    </location>
</feature>
<feature type="strand" evidence="6">
    <location>
        <begin position="156"/>
        <end position="160"/>
    </location>
</feature>
<feature type="helix" evidence="6">
    <location>
        <begin position="168"/>
        <end position="171"/>
    </location>
</feature>
<feature type="turn" evidence="6">
    <location>
        <begin position="178"/>
        <end position="182"/>
    </location>
</feature>
<feature type="strand" evidence="7">
    <location>
        <begin position="183"/>
        <end position="186"/>
    </location>
</feature>
<feature type="helix" evidence="6">
    <location>
        <begin position="190"/>
        <end position="199"/>
    </location>
</feature>
<feature type="strand" evidence="6">
    <location>
        <begin position="204"/>
        <end position="209"/>
    </location>
</feature>
<feature type="helix" evidence="6">
    <location>
        <begin position="212"/>
        <end position="216"/>
    </location>
</feature>
<feature type="helix" evidence="6">
    <location>
        <begin position="218"/>
        <end position="223"/>
    </location>
</feature>
<feature type="strand" evidence="6">
    <location>
        <begin position="224"/>
        <end position="227"/>
    </location>
</feature>
<feature type="turn" evidence="4">
    <location>
        <begin position="229"/>
        <end position="231"/>
    </location>
</feature>
<feature type="strand" evidence="6">
    <location>
        <begin position="233"/>
        <end position="235"/>
    </location>
</feature>
<feature type="helix" evidence="6">
    <location>
        <begin position="236"/>
        <end position="241"/>
    </location>
</feature>
<feature type="strand" evidence="6">
    <location>
        <begin position="244"/>
        <end position="247"/>
    </location>
</feature>
<feature type="strand" evidence="4">
    <location>
        <begin position="251"/>
        <end position="254"/>
    </location>
</feature>
<feature type="strand" evidence="4">
    <location>
        <begin position="256"/>
        <end position="258"/>
    </location>
</feature>
<feature type="helix" evidence="4">
    <location>
        <begin position="260"/>
        <end position="274"/>
    </location>
</feature>
<feature type="strand" evidence="4">
    <location>
        <begin position="275"/>
        <end position="277"/>
    </location>
</feature>
<feature type="strand" evidence="4">
    <location>
        <begin position="279"/>
        <end position="281"/>
    </location>
</feature>
<feature type="helix" evidence="4">
    <location>
        <begin position="293"/>
        <end position="295"/>
    </location>
</feature>
<feature type="strand" evidence="4">
    <location>
        <begin position="296"/>
        <end position="300"/>
    </location>
</feature>
<feature type="strand" evidence="4">
    <location>
        <begin position="306"/>
        <end position="309"/>
    </location>
</feature>
<feature type="helix" evidence="4">
    <location>
        <begin position="316"/>
        <end position="320"/>
    </location>
</feature>
<feature type="helix" evidence="4">
    <location>
        <begin position="323"/>
        <end position="332"/>
    </location>
</feature>
<feature type="strand" evidence="4">
    <location>
        <begin position="344"/>
        <end position="351"/>
    </location>
</feature>
<feature type="helix" evidence="4">
    <location>
        <begin position="352"/>
        <end position="365"/>
    </location>
</feature>
<feature type="strand" evidence="4">
    <location>
        <begin position="367"/>
        <end position="377"/>
    </location>
</feature>
<feature type="helix" evidence="4">
    <location>
        <begin position="378"/>
        <end position="385"/>
    </location>
</feature>
<feature type="strand" evidence="4">
    <location>
        <begin position="391"/>
        <end position="394"/>
    </location>
</feature>
<feature type="helix" evidence="4">
    <location>
        <begin position="396"/>
        <end position="403"/>
    </location>
</feature>
<feature type="turn" evidence="4">
    <location>
        <begin position="404"/>
        <end position="406"/>
    </location>
</feature>
<feature type="strand" evidence="4">
    <location>
        <begin position="408"/>
        <end position="415"/>
    </location>
</feature>
<feature type="strand" evidence="4">
    <location>
        <begin position="419"/>
        <end position="424"/>
    </location>
</feature>
<feature type="strand" evidence="4">
    <location>
        <begin position="431"/>
        <end position="437"/>
    </location>
</feature>
<feature type="helix" evidence="4">
    <location>
        <begin position="445"/>
        <end position="447"/>
    </location>
</feature>
<feature type="strand" evidence="4">
    <location>
        <begin position="454"/>
        <end position="456"/>
    </location>
</feature>
<feature type="turn" evidence="4">
    <location>
        <begin position="461"/>
        <end position="464"/>
    </location>
</feature>
<feature type="helix" evidence="4">
    <location>
        <begin position="465"/>
        <end position="475"/>
    </location>
</feature>
<feature type="helix" evidence="4">
    <location>
        <begin position="480"/>
        <end position="482"/>
    </location>
</feature>
<feature type="strand" evidence="4">
    <location>
        <begin position="484"/>
        <end position="486"/>
    </location>
</feature>
<feature type="helix" evidence="4">
    <location>
        <begin position="497"/>
        <end position="499"/>
    </location>
</feature>
<feature type="strand" evidence="4">
    <location>
        <begin position="505"/>
        <end position="509"/>
    </location>
</feature>
<feature type="turn" evidence="4">
    <location>
        <begin position="510"/>
        <end position="513"/>
    </location>
</feature>
<feature type="helix" evidence="4">
    <location>
        <begin position="523"/>
        <end position="533"/>
    </location>
</feature>
<feature type="strand" evidence="4">
    <location>
        <begin position="538"/>
        <end position="541"/>
    </location>
</feature>
<feature type="helix" evidence="4">
    <location>
        <begin position="545"/>
        <end position="547"/>
    </location>
</feature>
<feature type="strand" evidence="4">
    <location>
        <begin position="548"/>
        <end position="552"/>
    </location>
</feature>
<feature type="turn" evidence="4">
    <location>
        <begin position="557"/>
        <end position="559"/>
    </location>
</feature>
<feature type="helix" evidence="4">
    <location>
        <begin position="563"/>
        <end position="565"/>
    </location>
</feature>
<feature type="strand" evidence="4">
    <location>
        <begin position="567"/>
        <end position="569"/>
    </location>
</feature>
<feature type="strand" evidence="4">
    <location>
        <begin position="575"/>
        <end position="577"/>
    </location>
</feature>
<feature type="strand" evidence="4">
    <location>
        <begin position="586"/>
        <end position="589"/>
    </location>
</feature>
<feature type="strand" evidence="4">
    <location>
        <begin position="593"/>
        <end position="596"/>
    </location>
</feature>
<feature type="turn" evidence="4">
    <location>
        <begin position="598"/>
        <end position="600"/>
    </location>
</feature>
<feature type="helix" evidence="4">
    <location>
        <begin position="601"/>
        <end position="615"/>
    </location>
</feature>
<feature type="turn" evidence="4">
    <location>
        <begin position="620"/>
        <end position="624"/>
    </location>
</feature>
<feature type="strand" evidence="4">
    <location>
        <begin position="631"/>
        <end position="634"/>
    </location>
</feature>
<feature type="strand" evidence="4">
    <location>
        <begin position="643"/>
        <end position="646"/>
    </location>
</feature>
<feature type="helix" evidence="4">
    <location>
        <begin position="653"/>
        <end position="657"/>
    </location>
</feature>
<feature type="helix" evidence="4">
    <location>
        <begin position="659"/>
        <end position="668"/>
    </location>
</feature>
<feature type="helix" evidence="4">
    <location>
        <begin position="675"/>
        <end position="683"/>
    </location>
</feature>